<keyword id="KW-0217">Developmental protein</keyword>
<keyword id="KW-0238">DNA-binding</keyword>
<keyword id="KW-0371">Homeobox</keyword>
<keyword id="KW-0539">Nucleus</keyword>
<keyword id="KW-1185">Reference proteome</keyword>
<keyword id="KW-0804">Transcription</keyword>
<keyword id="KW-0805">Transcription regulation</keyword>
<name>ARX_DANRE</name>
<feature type="chain" id="PRO_0000048818" description="Aristaless-related homeobox protein">
    <location>
        <begin position="1"/>
        <end position="453"/>
    </location>
</feature>
<feature type="DNA-binding region" description="Homeobox" evidence="2">
    <location>
        <begin position="215"/>
        <end position="274"/>
    </location>
</feature>
<feature type="region of interest" description="Disordered" evidence="4">
    <location>
        <begin position="1"/>
        <end position="21"/>
    </location>
</feature>
<feature type="region of interest" description="Disordered" evidence="4">
    <location>
        <begin position="49"/>
        <end position="75"/>
    </location>
</feature>
<feature type="region of interest" description="Disordered" evidence="4">
    <location>
        <begin position="124"/>
        <end position="149"/>
    </location>
</feature>
<feature type="region of interest" description="Disordered" evidence="4">
    <location>
        <begin position="170"/>
        <end position="212"/>
    </location>
</feature>
<feature type="region of interest" description="Disordered" evidence="4">
    <location>
        <begin position="390"/>
        <end position="418"/>
    </location>
</feature>
<feature type="short sequence motif" description="OAR" evidence="3">
    <location>
        <begin position="421"/>
        <end position="434"/>
    </location>
</feature>
<feature type="compositionally biased region" description="Basic and acidic residues" evidence="4">
    <location>
        <begin position="7"/>
        <end position="17"/>
    </location>
</feature>
<feature type="compositionally biased region" description="Basic and acidic residues" evidence="4">
    <location>
        <begin position="53"/>
        <end position="75"/>
    </location>
</feature>
<feature type="compositionally biased region" description="Basic and acidic residues" evidence="4">
    <location>
        <begin position="179"/>
        <end position="195"/>
    </location>
</feature>
<feature type="compositionally biased region" description="Low complexity" evidence="4">
    <location>
        <begin position="401"/>
        <end position="418"/>
    </location>
</feature>
<evidence type="ECO:0000250" key="1">
    <source>
        <dbReference type="UniProtKB" id="Q96QS3"/>
    </source>
</evidence>
<evidence type="ECO:0000255" key="2">
    <source>
        <dbReference type="PROSITE-ProRule" id="PRU00108"/>
    </source>
</evidence>
<evidence type="ECO:0000255" key="3">
    <source>
        <dbReference type="PROSITE-ProRule" id="PRU00138"/>
    </source>
</evidence>
<evidence type="ECO:0000256" key="4">
    <source>
        <dbReference type="SAM" id="MobiDB-lite"/>
    </source>
</evidence>
<evidence type="ECO:0000305" key="5"/>
<proteinExistence type="evidence at transcript level"/>
<dbReference type="EMBL" id="AB006104">
    <property type="protein sequence ID" value="BAA21764.1"/>
    <property type="molecule type" value="mRNA"/>
</dbReference>
<dbReference type="RefSeq" id="NP_571459.1">
    <property type="nucleotide sequence ID" value="NM_131384.1"/>
</dbReference>
<dbReference type="SMR" id="O42115"/>
<dbReference type="FunCoup" id="O42115">
    <property type="interactions" value="354"/>
</dbReference>
<dbReference type="STRING" id="7955.ENSDARP00000075256"/>
<dbReference type="PaxDb" id="7955-ENSDARP00000075256"/>
<dbReference type="Ensembl" id="ENSDART00000080810">
    <property type="protein sequence ID" value="ENSDARP00000075256"/>
    <property type="gene ID" value="ENSDARG00000058011"/>
</dbReference>
<dbReference type="GeneID" id="30657"/>
<dbReference type="KEGG" id="dre:30657"/>
<dbReference type="AGR" id="ZFIN:ZDB-GENE-990415-15"/>
<dbReference type="CTD" id="30657"/>
<dbReference type="ZFIN" id="ZDB-GENE-990415-15">
    <property type="gene designation" value="arxa"/>
</dbReference>
<dbReference type="eggNOG" id="KOG0490">
    <property type="taxonomic scope" value="Eukaryota"/>
</dbReference>
<dbReference type="HOGENOM" id="CLU_047013_7_0_1"/>
<dbReference type="InParanoid" id="O42115"/>
<dbReference type="OMA" id="SYREHAL"/>
<dbReference type="OrthoDB" id="6159439at2759"/>
<dbReference type="PhylomeDB" id="O42115"/>
<dbReference type="TreeFam" id="TF350743"/>
<dbReference type="PRO" id="PR:O42115"/>
<dbReference type="Proteomes" id="UP000000437">
    <property type="component" value="Chromosome 24"/>
</dbReference>
<dbReference type="Bgee" id="ENSDARG00000058011">
    <property type="expression patterns" value="Expressed in floor plate and 41 other cell types or tissues"/>
</dbReference>
<dbReference type="ExpressionAtlas" id="O42115">
    <property type="expression patterns" value="baseline"/>
</dbReference>
<dbReference type="GO" id="GO:0005634">
    <property type="term" value="C:nucleus"/>
    <property type="evidence" value="ECO:0007669"/>
    <property type="project" value="UniProtKB-SubCell"/>
</dbReference>
<dbReference type="GO" id="GO:0000981">
    <property type="term" value="F:DNA-binding transcription factor activity, RNA polymerase II-specific"/>
    <property type="evidence" value="ECO:0000318"/>
    <property type="project" value="GO_Central"/>
</dbReference>
<dbReference type="GO" id="GO:0000977">
    <property type="term" value="F:RNA polymerase II transcription regulatory region sequence-specific DNA binding"/>
    <property type="evidence" value="ECO:0000318"/>
    <property type="project" value="GO_Central"/>
</dbReference>
<dbReference type="GO" id="GO:0048666">
    <property type="term" value="P:neuron development"/>
    <property type="evidence" value="ECO:0000315"/>
    <property type="project" value="ZFIN"/>
</dbReference>
<dbReference type="GO" id="GO:0003322">
    <property type="term" value="P:pancreatic A cell development"/>
    <property type="evidence" value="ECO:0000315"/>
    <property type="project" value="ZFIN"/>
</dbReference>
<dbReference type="GO" id="GO:0006357">
    <property type="term" value="P:regulation of transcription by RNA polymerase II"/>
    <property type="evidence" value="ECO:0000318"/>
    <property type="project" value="GO_Central"/>
</dbReference>
<dbReference type="GO" id="GO:0021539">
    <property type="term" value="P:subthalamus development"/>
    <property type="evidence" value="ECO:0000315"/>
    <property type="project" value="ZFIN"/>
</dbReference>
<dbReference type="GO" id="GO:0021537">
    <property type="term" value="P:telencephalon development"/>
    <property type="evidence" value="ECO:0000315"/>
    <property type="project" value="ZFIN"/>
</dbReference>
<dbReference type="GO" id="GO:0021794">
    <property type="term" value="P:thalamus development"/>
    <property type="evidence" value="ECO:0000315"/>
    <property type="project" value="ZFIN"/>
</dbReference>
<dbReference type="CDD" id="cd00086">
    <property type="entry name" value="homeodomain"/>
    <property type="match status" value="1"/>
</dbReference>
<dbReference type="FunFam" id="1.10.10.60:FF:000102">
    <property type="entry name" value="Aristaless related homeobox"/>
    <property type="match status" value="1"/>
</dbReference>
<dbReference type="Gene3D" id="1.10.10.60">
    <property type="entry name" value="Homeodomain-like"/>
    <property type="match status" value="1"/>
</dbReference>
<dbReference type="InterPro" id="IPR001356">
    <property type="entry name" value="HD"/>
</dbReference>
<dbReference type="InterPro" id="IPR017970">
    <property type="entry name" value="Homeobox_CS"/>
</dbReference>
<dbReference type="InterPro" id="IPR009057">
    <property type="entry name" value="Homeodomain-like_sf"/>
</dbReference>
<dbReference type="InterPro" id="IPR003654">
    <property type="entry name" value="OAR_dom"/>
</dbReference>
<dbReference type="InterPro" id="IPR050649">
    <property type="entry name" value="Paired_Homeobox_TFs"/>
</dbReference>
<dbReference type="PANTHER" id="PTHR24329:SF337">
    <property type="entry name" value="ARISTALESS RELATED HOMEOBOX"/>
    <property type="match status" value="1"/>
</dbReference>
<dbReference type="PANTHER" id="PTHR24329">
    <property type="entry name" value="HOMEOBOX PROTEIN ARISTALESS"/>
    <property type="match status" value="1"/>
</dbReference>
<dbReference type="Pfam" id="PF00046">
    <property type="entry name" value="Homeodomain"/>
    <property type="match status" value="1"/>
</dbReference>
<dbReference type="Pfam" id="PF03826">
    <property type="entry name" value="OAR"/>
    <property type="match status" value="1"/>
</dbReference>
<dbReference type="SMART" id="SM00389">
    <property type="entry name" value="HOX"/>
    <property type="match status" value="1"/>
</dbReference>
<dbReference type="SUPFAM" id="SSF46689">
    <property type="entry name" value="Homeodomain-like"/>
    <property type="match status" value="1"/>
</dbReference>
<dbReference type="PROSITE" id="PS00027">
    <property type="entry name" value="HOMEOBOX_1"/>
    <property type="match status" value="1"/>
</dbReference>
<dbReference type="PROSITE" id="PS50071">
    <property type="entry name" value="HOMEOBOX_2"/>
    <property type="match status" value="1"/>
</dbReference>
<dbReference type="PROSITE" id="PS50803">
    <property type="entry name" value="OAR"/>
    <property type="match status" value="1"/>
</dbReference>
<gene>
    <name type="primary">arx</name>
</gene>
<reference key="1">
    <citation type="journal article" date="1997" name="Mech. Dev.">
        <title>Expression of a novel aristaless related homeobox gene 'Arx' in the vertebrate telencephalon, diencephalon and floor plate.</title>
        <authorList>
            <person name="Miura H."/>
            <person name="Yanazawa M."/>
            <person name="Kato K."/>
            <person name="Kitamura K."/>
        </authorList>
    </citation>
    <scope>NUCLEOTIDE SEQUENCE [MRNA]</scope>
    <source>
        <tissue>Embryo</tissue>
    </source>
</reference>
<comment type="function">
    <text evidence="1">Transcription factor (By similarity). Appears to be indispensable for the central nervous system development. May have a role in the neuronal differentiation of the ganglionic eminence and ventral thalamus. May also be involved in axonal guidance in the floor plate.</text>
</comment>
<comment type="subcellular location">
    <subcellularLocation>
        <location evidence="2 3">Nucleus</location>
    </subcellularLocation>
</comment>
<comment type="tissue specificity">
    <text>Expressed in brain.</text>
</comment>
<comment type="developmental stage">
    <text>Expressed at 10 hours and 12 hours in presumptive diencephalon. Expressed transiently at 12 hours in caudal telencephalon. Later expression in floor plate and somites, followed by rostral telencephalon and ventral thalamus. Expressed at 40 hours in hypothalamus.</text>
</comment>
<comment type="similarity">
    <text evidence="5">Belongs to the paired homeobox family. Bicoid subfamily.</text>
</comment>
<accession>O42115</accession>
<organism>
    <name type="scientific">Danio rerio</name>
    <name type="common">Zebrafish</name>
    <name type="synonym">Brachydanio rerio</name>
    <dbReference type="NCBI Taxonomy" id="7955"/>
    <lineage>
        <taxon>Eukaryota</taxon>
        <taxon>Metazoa</taxon>
        <taxon>Chordata</taxon>
        <taxon>Craniata</taxon>
        <taxon>Vertebrata</taxon>
        <taxon>Euteleostomi</taxon>
        <taxon>Actinopterygii</taxon>
        <taxon>Neopterygii</taxon>
        <taxon>Teleostei</taxon>
        <taxon>Ostariophysi</taxon>
        <taxon>Cypriniformes</taxon>
        <taxon>Danionidae</taxon>
        <taxon>Danioninae</taxon>
        <taxon>Danio</taxon>
    </lineage>
</organism>
<protein>
    <recommendedName>
        <fullName>Aristaless-related homeobox protein</fullName>
        <shortName>ARX</shortName>
    </recommendedName>
</protein>
<sequence length="453" mass="49396">MSSQYDDDSRDRSECKSKSPTVLSSYCIDSILGRRSPCKVRQLGAQSLPAPVRPDHEMTTEVTSKENSFDSDMHLPPKLRRLYGPGGKYLDSGRGFHEHLEKGERERLLDQACESLKISQAPQVSISRSKSYRENAPFSQSDEGQSPEHMAQELVELSTLKFEEDVVKEEACGDNSLSPKDEESLHNDGDVKDGEDSVCLSAGSDSEEGMLKRKQRRYRTTFTSYQLEELERAFQKTHYPDVFTREELAMRLDLTEARVQVWFQNRRAKWRKREKAGVQAHPTGLPFPGPLAAAHPLSHYLEGGPFPPHPHPALESAWTAAAAAAAAFPGLAPPPNSSALPPATPLGLGTFLGTAMFRHPAFIGPTFGRLFSSMGPLTSASTAAALLRQTAPPVESPVQPSAALPEPPSSSSSTAADRRASSIAALRLKAKEHSAQLTQLNILPSGTAGKEVC</sequence>